<keyword id="KW-0007">Acetylation</keyword>
<keyword id="KW-0025">Alternative splicing</keyword>
<keyword id="KW-0488">Methylation</keyword>
<keyword id="KW-1185">Reference proteome</keyword>
<sequence length="244" mass="26184">MNPVYSPVQPGAPYGNPKNMAYTGYPTAYPAAAPAYNPSLYPTNSPSYAPEFQFLHSAYATLLMKQAWPQNSSSCGTEGTFHLPVDTGTENRTYQASSAAFRYTAGTPYKVPPTQSNTAPPPYSPSPNPYQTAMYPIRSAYPQQNLYAQGAYYTQPVYAAQPHVIHHTTVVQPNSIPSAIYPAPVAAPRTNGVAMGMVAGTTMAMSAGTLLTTPQHTAIGAHPVSMPTYRAQGTPAYSYVPPHW</sequence>
<feature type="chain" id="PRO_0000050743" description="Protein FAM168A">
    <location>
        <begin position="1"/>
        <end position="244"/>
    </location>
</feature>
<feature type="region of interest" description="Disordered" evidence="2">
    <location>
        <begin position="107"/>
        <end position="126"/>
    </location>
</feature>
<feature type="modified residue" description="N-acetylmethionine" evidence="1">
    <location>
        <position position="1"/>
    </location>
</feature>
<feature type="modified residue" description="Asymmetric dimethylarginine" evidence="5">
    <location>
        <position position="102"/>
    </location>
</feature>
<feature type="splice variant" id="VSP_010096" description="In isoform 2." evidence="3">
    <location>
        <begin position="51"/>
        <end position="59"/>
    </location>
</feature>
<feature type="sequence conflict" description="In Ref. 3; BAC65517." evidence="4" ref="3">
    <original>GTFHL</original>
    <variation>RHLPP</variation>
    <location>
        <begin position="79"/>
        <end position="83"/>
    </location>
</feature>
<comment type="function">
    <text evidence="1">In cancer context, protects cells from induced-DNA damage and apoptosis. Acts, at least in part, through PI3K/AKT/NFKB signaling pathway and by preventing POLB degradation. Decreases POLB ubiquitation and stabilizes its protein levels.</text>
</comment>
<comment type="subunit">
    <text evidence="1">Interacts with POLB. Interacts with AKT1 and MT1X. May interact with FAM168B.</text>
</comment>
<comment type="alternative products">
    <event type="alternative splicing"/>
    <isoform>
        <id>Q8BGZ2-1</id>
        <name>1</name>
        <sequence type="displayed"/>
    </isoform>
    <isoform>
        <id>Q8BGZ2-2</id>
        <name>2</name>
        <sequence type="described" ref="VSP_010096"/>
    </isoform>
</comment>
<comment type="similarity">
    <text evidence="4">Belongs to the FAM168 family.</text>
</comment>
<reference key="1">
    <citation type="journal article" date="2005" name="Science">
        <title>The transcriptional landscape of the mammalian genome.</title>
        <authorList>
            <person name="Carninci P."/>
            <person name="Kasukawa T."/>
            <person name="Katayama S."/>
            <person name="Gough J."/>
            <person name="Frith M.C."/>
            <person name="Maeda N."/>
            <person name="Oyama R."/>
            <person name="Ravasi T."/>
            <person name="Lenhard B."/>
            <person name="Wells C."/>
            <person name="Kodzius R."/>
            <person name="Shimokawa K."/>
            <person name="Bajic V.B."/>
            <person name="Brenner S.E."/>
            <person name="Batalov S."/>
            <person name="Forrest A.R."/>
            <person name="Zavolan M."/>
            <person name="Davis M.J."/>
            <person name="Wilming L.G."/>
            <person name="Aidinis V."/>
            <person name="Allen J.E."/>
            <person name="Ambesi-Impiombato A."/>
            <person name="Apweiler R."/>
            <person name="Aturaliya R.N."/>
            <person name="Bailey T.L."/>
            <person name="Bansal M."/>
            <person name="Baxter L."/>
            <person name="Beisel K.W."/>
            <person name="Bersano T."/>
            <person name="Bono H."/>
            <person name="Chalk A.M."/>
            <person name="Chiu K.P."/>
            <person name="Choudhary V."/>
            <person name="Christoffels A."/>
            <person name="Clutterbuck D.R."/>
            <person name="Crowe M.L."/>
            <person name="Dalla E."/>
            <person name="Dalrymple B.P."/>
            <person name="de Bono B."/>
            <person name="Della Gatta G."/>
            <person name="di Bernardo D."/>
            <person name="Down T."/>
            <person name="Engstrom P."/>
            <person name="Fagiolini M."/>
            <person name="Faulkner G."/>
            <person name="Fletcher C.F."/>
            <person name="Fukushima T."/>
            <person name="Furuno M."/>
            <person name="Futaki S."/>
            <person name="Gariboldi M."/>
            <person name="Georgii-Hemming P."/>
            <person name="Gingeras T.R."/>
            <person name="Gojobori T."/>
            <person name="Green R.E."/>
            <person name="Gustincich S."/>
            <person name="Harbers M."/>
            <person name="Hayashi Y."/>
            <person name="Hensch T.K."/>
            <person name="Hirokawa N."/>
            <person name="Hill D."/>
            <person name="Huminiecki L."/>
            <person name="Iacono M."/>
            <person name="Ikeo K."/>
            <person name="Iwama A."/>
            <person name="Ishikawa T."/>
            <person name="Jakt M."/>
            <person name="Kanapin A."/>
            <person name="Katoh M."/>
            <person name="Kawasawa Y."/>
            <person name="Kelso J."/>
            <person name="Kitamura H."/>
            <person name="Kitano H."/>
            <person name="Kollias G."/>
            <person name="Krishnan S.P."/>
            <person name="Kruger A."/>
            <person name="Kummerfeld S.K."/>
            <person name="Kurochkin I.V."/>
            <person name="Lareau L.F."/>
            <person name="Lazarevic D."/>
            <person name="Lipovich L."/>
            <person name="Liu J."/>
            <person name="Liuni S."/>
            <person name="McWilliam S."/>
            <person name="Madan Babu M."/>
            <person name="Madera M."/>
            <person name="Marchionni L."/>
            <person name="Matsuda H."/>
            <person name="Matsuzawa S."/>
            <person name="Miki H."/>
            <person name="Mignone F."/>
            <person name="Miyake S."/>
            <person name="Morris K."/>
            <person name="Mottagui-Tabar S."/>
            <person name="Mulder N."/>
            <person name="Nakano N."/>
            <person name="Nakauchi H."/>
            <person name="Ng P."/>
            <person name="Nilsson R."/>
            <person name="Nishiguchi S."/>
            <person name="Nishikawa S."/>
            <person name="Nori F."/>
            <person name="Ohara O."/>
            <person name="Okazaki Y."/>
            <person name="Orlando V."/>
            <person name="Pang K.C."/>
            <person name="Pavan W.J."/>
            <person name="Pavesi G."/>
            <person name="Pesole G."/>
            <person name="Petrovsky N."/>
            <person name="Piazza S."/>
            <person name="Reed J."/>
            <person name="Reid J.F."/>
            <person name="Ring B.Z."/>
            <person name="Ringwald M."/>
            <person name="Rost B."/>
            <person name="Ruan Y."/>
            <person name="Salzberg S.L."/>
            <person name="Sandelin A."/>
            <person name="Schneider C."/>
            <person name="Schoenbach C."/>
            <person name="Sekiguchi K."/>
            <person name="Semple C.A."/>
            <person name="Seno S."/>
            <person name="Sessa L."/>
            <person name="Sheng Y."/>
            <person name="Shibata Y."/>
            <person name="Shimada H."/>
            <person name="Shimada K."/>
            <person name="Silva D."/>
            <person name="Sinclair B."/>
            <person name="Sperling S."/>
            <person name="Stupka E."/>
            <person name="Sugiura K."/>
            <person name="Sultana R."/>
            <person name="Takenaka Y."/>
            <person name="Taki K."/>
            <person name="Tammoja K."/>
            <person name="Tan S.L."/>
            <person name="Tang S."/>
            <person name="Taylor M.S."/>
            <person name="Tegner J."/>
            <person name="Teichmann S.A."/>
            <person name="Ueda H.R."/>
            <person name="van Nimwegen E."/>
            <person name="Verardo R."/>
            <person name="Wei C.L."/>
            <person name="Yagi K."/>
            <person name="Yamanishi H."/>
            <person name="Zabarovsky E."/>
            <person name="Zhu S."/>
            <person name="Zimmer A."/>
            <person name="Hide W."/>
            <person name="Bult C."/>
            <person name="Grimmond S.M."/>
            <person name="Teasdale R.D."/>
            <person name="Liu E.T."/>
            <person name="Brusic V."/>
            <person name="Quackenbush J."/>
            <person name="Wahlestedt C."/>
            <person name="Mattick J.S."/>
            <person name="Hume D.A."/>
            <person name="Kai C."/>
            <person name="Sasaki D."/>
            <person name="Tomaru Y."/>
            <person name="Fukuda S."/>
            <person name="Kanamori-Katayama M."/>
            <person name="Suzuki M."/>
            <person name="Aoki J."/>
            <person name="Arakawa T."/>
            <person name="Iida J."/>
            <person name="Imamura K."/>
            <person name="Itoh M."/>
            <person name="Kato T."/>
            <person name="Kawaji H."/>
            <person name="Kawagashira N."/>
            <person name="Kawashima T."/>
            <person name="Kojima M."/>
            <person name="Kondo S."/>
            <person name="Konno H."/>
            <person name="Nakano K."/>
            <person name="Ninomiya N."/>
            <person name="Nishio T."/>
            <person name="Okada M."/>
            <person name="Plessy C."/>
            <person name="Shibata K."/>
            <person name="Shiraki T."/>
            <person name="Suzuki S."/>
            <person name="Tagami M."/>
            <person name="Waki K."/>
            <person name="Watahiki A."/>
            <person name="Okamura-Oho Y."/>
            <person name="Suzuki H."/>
            <person name="Kawai J."/>
            <person name="Hayashizaki Y."/>
        </authorList>
    </citation>
    <scope>NUCLEOTIDE SEQUENCE [LARGE SCALE MRNA] (ISOFORMS 1 AND 2)</scope>
    <source>
        <strain>C57BL/6J</strain>
        <tissue>Cerebellum</tissue>
        <tissue>Head</tissue>
        <tissue>Spinal ganglion</tissue>
    </source>
</reference>
<reference key="2">
    <citation type="journal article" date="2004" name="Genome Res.">
        <title>The status, quality, and expansion of the NIH full-length cDNA project: the Mammalian Gene Collection (MGC).</title>
        <authorList>
            <consortium name="The MGC Project Team"/>
        </authorList>
    </citation>
    <scope>NUCLEOTIDE SEQUENCE [LARGE SCALE MRNA] (ISOFORM 1)</scope>
    <source>
        <strain>C57BL/6J</strain>
        <tissue>Brain</tissue>
    </source>
</reference>
<reference key="3">
    <citation type="journal article" date="2003" name="DNA Res.">
        <title>Prediction of the coding sequences of mouse homologues of KIAA gene: II. The complete nucleotide sequences of 400 mouse KIAA-homologous cDNAs identified by screening of terminal sequences of cDNA clones randomly sampled from size-fractionated libraries.</title>
        <authorList>
            <person name="Okazaki N."/>
            <person name="Kikuno R."/>
            <person name="Ohara R."/>
            <person name="Inamoto S."/>
            <person name="Aizawa H."/>
            <person name="Yuasa S."/>
            <person name="Nakajima D."/>
            <person name="Nagase T."/>
            <person name="Ohara O."/>
            <person name="Koga H."/>
        </authorList>
    </citation>
    <scope>NUCLEOTIDE SEQUENCE [LARGE SCALE MRNA] OF 79-244</scope>
    <source>
        <tissue>Brain</tissue>
    </source>
</reference>
<reference key="4">
    <citation type="journal article" date="2014" name="Mol. Cell. Proteomics">
        <title>Immunoaffinity enrichment and mass spectrometry analysis of protein methylation.</title>
        <authorList>
            <person name="Guo A."/>
            <person name="Gu H."/>
            <person name="Zhou J."/>
            <person name="Mulhern D."/>
            <person name="Wang Y."/>
            <person name="Lee K.A."/>
            <person name="Yang V."/>
            <person name="Aguiar M."/>
            <person name="Kornhauser J."/>
            <person name="Jia X."/>
            <person name="Ren J."/>
            <person name="Beausoleil S.A."/>
            <person name="Silva J.C."/>
            <person name="Vemulapalli V."/>
            <person name="Bedford M.T."/>
            <person name="Comb M.J."/>
        </authorList>
    </citation>
    <scope>METHYLATION [LARGE SCALE ANALYSIS] AT ARG-102</scope>
    <scope>IDENTIFICATION BY MASS SPECTROMETRY [LARGE SCALE ANALYSIS]</scope>
    <source>
        <tissue>Embryo</tissue>
    </source>
</reference>
<proteinExistence type="evidence at protein level"/>
<accession>Q8BGZ2</accession>
<accession>Q3UVC2</accession>
<accession>Q80U50</accession>
<accession>Q8BGN7</accession>
<gene>
    <name type="primary">Fam168a</name>
    <name type="synonym">Kiaa0280</name>
</gene>
<organism>
    <name type="scientific">Mus musculus</name>
    <name type="common">Mouse</name>
    <dbReference type="NCBI Taxonomy" id="10090"/>
    <lineage>
        <taxon>Eukaryota</taxon>
        <taxon>Metazoa</taxon>
        <taxon>Chordata</taxon>
        <taxon>Craniata</taxon>
        <taxon>Vertebrata</taxon>
        <taxon>Euteleostomi</taxon>
        <taxon>Mammalia</taxon>
        <taxon>Eutheria</taxon>
        <taxon>Euarchontoglires</taxon>
        <taxon>Glires</taxon>
        <taxon>Rodentia</taxon>
        <taxon>Myomorpha</taxon>
        <taxon>Muroidea</taxon>
        <taxon>Muridae</taxon>
        <taxon>Murinae</taxon>
        <taxon>Mus</taxon>
        <taxon>Mus</taxon>
    </lineage>
</organism>
<dbReference type="EMBL" id="AK043083">
    <property type="protein sequence ID" value="BAC31453.1"/>
    <property type="molecule type" value="mRNA"/>
</dbReference>
<dbReference type="EMBL" id="AK047153">
    <property type="protein sequence ID" value="BAC32972.1"/>
    <property type="molecule type" value="mRNA"/>
</dbReference>
<dbReference type="EMBL" id="AK048559">
    <property type="protein sequence ID" value="BAC33374.1"/>
    <property type="molecule type" value="mRNA"/>
</dbReference>
<dbReference type="EMBL" id="AK051453">
    <property type="protein sequence ID" value="BAC34646.1"/>
    <property type="molecule type" value="mRNA"/>
</dbReference>
<dbReference type="EMBL" id="AK137424">
    <property type="protein sequence ID" value="BAE23348.1"/>
    <property type="molecule type" value="mRNA"/>
</dbReference>
<dbReference type="EMBL" id="BC076580">
    <property type="protein sequence ID" value="AAH76580.1"/>
    <property type="molecule type" value="mRNA"/>
</dbReference>
<dbReference type="EMBL" id="AK122235">
    <property type="protein sequence ID" value="BAC65517.1"/>
    <property type="molecule type" value="mRNA"/>
</dbReference>
<dbReference type="CCDS" id="CCDS21505.1">
    <molecule id="Q8BGZ2-2"/>
</dbReference>
<dbReference type="CCDS" id="CCDS90280.1">
    <molecule id="Q8BGZ2-1"/>
</dbReference>
<dbReference type="RefSeq" id="NP_001349098.1">
    <molecule id="Q8BGZ2-1"/>
    <property type="nucleotide sequence ID" value="NM_001362169.1"/>
</dbReference>
<dbReference type="RefSeq" id="NP_001349099.1">
    <molecule id="Q8BGZ2-2"/>
    <property type="nucleotide sequence ID" value="NM_001362170.1"/>
</dbReference>
<dbReference type="RefSeq" id="NP_848879.1">
    <molecule id="Q8BGZ2-2"/>
    <property type="nucleotide sequence ID" value="NM_178764.4"/>
</dbReference>
<dbReference type="RefSeq" id="XP_006507982.1">
    <property type="nucleotide sequence ID" value="XM_006507919.2"/>
</dbReference>
<dbReference type="RefSeq" id="XP_006507983.1">
    <molecule id="Q8BGZ2-1"/>
    <property type="nucleotide sequence ID" value="XM_006507920.3"/>
</dbReference>
<dbReference type="RefSeq" id="XP_006507985.1">
    <property type="nucleotide sequence ID" value="XM_006507922.2"/>
</dbReference>
<dbReference type="BioGRID" id="235392">
    <property type="interactions" value="2"/>
</dbReference>
<dbReference type="FunCoup" id="Q8BGZ2">
    <property type="interactions" value="257"/>
</dbReference>
<dbReference type="IntAct" id="Q8BGZ2">
    <property type="interactions" value="1"/>
</dbReference>
<dbReference type="STRING" id="10090.ENSMUSP00000038233"/>
<dbReference type="GlyGen" id="Q8BGZ2">
    <property type="glycosylation" value="3 sites, 1 O-linked glycan (3 sites)"/>
</dbReference>
<dbReference type="iPTMnet" id="Q8BGZ2"/>
<dbReference type="PhosphoSitePlus" id="Q8BGZ2"/>
<dbReference type="PaxDb" id="10090-ENSMUSP00000038233"/>
<dbReference type="ProteomicsDB" id="271526">
    <molecule id="Q8BGZ2-1"/>
</dbReference>
<dbReference type="ProteomicsDB" id="271527">
    <molecule id="Q8BGZ2-2"/>
</dbReference>
<dbReference type="Pumba" id="Q8BGZ2"/>
<dbReference type="Antibodypedia" id="50128">
    <property type="antibodies" value="39 antibodies from 12 providers"/>
</dbReference>
<dbReference type="DNASU" id="319604"/>
<dbReference type="Ensembl" id="ENSMUST00000049053.9">
    <molecule id="Q8BGZ2-2"/>
    <property type="protein sequence ID" value="ENSMUSP00000038233.8"/>
    <property type="gene ID" value="ENSMUSG00000029461.18"/>
</dbReference>
<dbReference type="Ensembl" id="ENSMUST00000107042.9">
    <molecule id="Q8BGZ2-1"/>
    <property type="protein sequence ID" value="ENSMUSP00000102657.3"/>
    <property type="gene ID" value="ENSMUSG00000029461.18"/>
</dbReference>
<dbReference type="Ensembl" id="ENSMUST00000207875.2">
    <molecule id="Q8BGZ2-2"/>
    <property type="protein sequence ID" value="ENSMUSP00000146851.2"/>
    <property type="gene ID" value="ENSMUSG00000029461.18"/>
</dbReference>
<dbReference type="Ensembl" id="ENSMUST00000216021.2">
    <molecule id="Q8BGZ2-2"/>
    <property type="protein sequence ID" value="ENSMUSP00000149345.2"/>
    <property type="gene ID" value="ENSMUSG00000029461.18"/>
</dbReference>
<dbReference type="GeneID" id="319604"/>
<dbReference type="KEGG" id="mmu:319604"/>
<dbReference type="UCSC" id="uc009inr.1">
    <molecule id="Q8BGZ2-1"/>
    <property type="organism name" value="mouse"/>
</dbReference>
<dbReference type="AGR" id="MGI:2442372"/>
<dbReference type="CTD" id="23201"/>
<dbReference type="MGI" id="MGI:2442372">
    <property type="gene designation" value="Fam168a"/>
</dbReference>
<dbReference type="VEuPathDB" id="HostDB:ENSMUSG00000029461"/>
<dbReference type="eggNOG" id="ENOG502QRTA">
    <property type="taxonomic scope" value="Eukaryota"/>
</dbReference>
<dbReference type="GeneTree" id="ENSGT00390000005140"/>
<dbReference type="HOGENOM" id="CLU_065824_0_0_1"/>
<dbReference type="InParanoid" id="Q8BGZ2"/>
<dbReference type="OMA" id="WTNNINI"/>
<dbReference type="PhylomeDB" id="Q8BGZ2"/>
<dbReference type="TreeFam" id="TF331128"/>
<dbReference type="BioGRID-ORCS" id="319604">
    <property type="hits" value="5 hits in 76 CRISPR screens"/>
</dbReference>
<dbReference type="ChiTaRS" id="Fam168a">
    <property type="organism name" value="mouse"/>
</dbReference>
<dbReference type="PRO" id="PR:Q8BGZ2"/>
<dbReference type="Proteomes" id="UP000000589">
    <property type="component" value="Chromosome 7"/>
</dbReference>
<dbReference type="RNAct" id="Q8BGZ2">
    <property type="molecule type" value="protein"/>
</dbReference>
<dbReference type="Bgee" id="ENSMUSG00000029461">
    <property type="expression patterns" value="Expressed in rostral migratory stream and 227 other cell types or tissues"/>
</dbReference>
<dbReference type="ExpressionAtlas" id="Q8BGZ2">
    <property type="expression patterns" value="baseline and differential"/>
</dbReference>
<dbReference type="GO" id="GO:1905053">
    <property type="term" value="P:positive regulation of base-excision repair"/>
    <property type="evidence" value="ECO:0000250"/>
    <property type="project" value="UniProtKB"/>
</dbReference>
<dbReference type="InterPro" id="IPR029247">
    <property type="entry name" value="FAM168A/MANI"/>
</dbReference>
<dbReference type="PANTHER" id="PTHR31844">
    <property type="entry name" value="MYELIN-ASSOCIATED NEURITE-OUTGROWTH INHIBITOR-RELATED"/>
    <property type="match status" value="1"/>
</dbReference>
<dbReference type="Pfam" id="PF14944">
    <property type="entry name" value="TCRP1"/>
    <property type="match status" value="1"/>
</dbReference>
<evidence type="ECO:0000250" key="1">
    <source>
        <dbReference type="UniProtKB" id="Q92567"/>
    </source>
</evidence>
<evidence type="ECO:0000256" key="2">
    <source>
        <dbReference type="SAM" id="MobiDB-lite"/>
    </source>
</evidence>
<evidence type="ECO:0000303" key="3">
    <source>
    </source>
</evidence>
<evidence type="ECO:0000305" key="4"/>
<evidence type="ECO:0007744" key="5">
    <source>
    </source>
</evidence>
<name>F168A_MOUSE</name>
<protein>
    <recommendedName>
        <fullName>Protein FAM168A</fullName>
    </recommendedName>
</protein>